<gene>
    <name type="primary">PCS1</name>
</gene>
<keyword id="KW-0012">Acyltransferase</keyword>
<keyword id="KW-0104">Cadmium</keyword>
<keyword id="KW-0479">Metal-binding</keyword>
<keyword id="KW-1185">Reference proteome</keyword>
<keyword id="KW-0808">Transferase</keyword>
<organism>
    <name type="scientific">Triticum aestivum</name>
    <name type="common">Wheat</name>
    <dbReference type="NCBI Taxonomy" id="4565"/>
    <lineage>
        <taxon>Eukaryota</taxon>
        <taxon>Viridiplantae</taxon>
        <taxon>Streptophyta</taxon>
        <taxon>Embryophyta</taxon>
        <taxon>Tracheophyta</taxon>
        <taxon>Spermatophyta</taxon>
        <taxon>Magnoliopsida</taxon>
        <taxon>Liliopsida</taxon>
        <taxon>Poales</taxon>
        <taxon>Poaceae</taxon>
        <taxon>BOP clade</taxon>
        <taxon>Pooideae</taxon>
        <taxon>Triticodae</taxon>
        <taxon>Triticeae</taxon>
        <taxon>Triticinae</taxon>
        <taxon>Triticum</taxon>
    </lineage>
</organism>
<dbReference type="EC" id="2.3.2.15"/>
<dbReference type="EMBL" id="AF093752">
    <property type="protein sequence ID" value="AAD50592.1"/>
    <property type="molecule type" value="mRNA"/>
</dbReference>
<dbReference type="SMR" id="Q9SWW5"/>
<dbReference type="STRING" id="4565.Q9SWW5"/>
<dbReference type="PaxDb" id="4565-Traes_7DS_E848BACC2.1"/>
<dbReference type="eggNOG" id="KOG0632">
    <property type="taxonomic scope" value="Eukaryota"/>
</dbReference>
<dbReference type="BioCyc" id="MetaCyc:MONOMER-16321"/>
<dbReference type="Proteomes" id="UP000019116">
    <property type="component" value="Unplaced"/>
</dbReference>
<dbReference type="ExpressionAtlas" id="Q9SWW5">
    <property type="expression patterns" value="baseline and differential"/>
</dbReference>
<dbReference type="GO" id="GO:0016756">
    <property type="term" value="F:glutathione gamma-glutamylcysteinyltransferase activity"/>
    <property type="evidence" value="ECO:0000318"/>
    <property type="project" value="GO_Central"/>
</dbReference>
<dbReference type="GO" id="GO:0046872">
    <property type="term" value="F:metal ion binding"/>
    <property type="evidence" value="ECO:0007669"/>
    <property type="project" value="UniProtKB-KW"/>
</dbReference>
<dbReference type="GO" id="GO:0098849">
    <property type="term" value="P:cellular detoxification of cadmium ion"/>
    <property type="evidence" value="ECO:0000318"/>
    <property type="project" value="GO_Central"/>
</dbReference>
<dbReference type="GO" id="GO:0010273">
    <property type="term" value="P:detoxification of copper ion"/>
    <property type="evidence" value="ECO:0000318"/>
    <property type="project" value="GO_Central"/>
</dbReference>
<dbReference type="GO" id="GO:0046938">
    <property type="term" value="P:phytochelatin biosynthetic process"/>
    <property type="evidence" value="ECO:0000318"/>
    <property type="project" value="GO_Central"/>
</dbReference>
<dbReference type="FunFam" id="3.90.70.30:FF:000001">
    <property type="entry name" value="Glutathione gamma-glutamylcysteinyltransferase 1"/>
    <property type="match status" value="1"/>
</dbReference>
<dbReference type="Gene3D" id="3.90.70.30">
    <property type="entry name" value="Phytochelatin synthase, N-terminal domain"/>
    <property type="match status" value="1"/>
</dbReference>
<dbReference type="InterPro" id="IPR038765">
    <property type="entry name" value="Papain-like_cys_pep_sf"/>
</dbReference>
<dbReference type="InterPro" id="IPR040409">
    <property type="entry name" value="PCS-like"/>
</dbReference>
<dbReference type="InterPro" id="IPR007719">
    <property type="entry name" value="PCS_N"/>
</dbReference>
<dbReference type="InterPro" id="IPR038156">
    <property type="entry name" value="PCS_N_sf"/>
</dbReference>
<dbReference type="InterPro" id="IPR015407">
    <property type="entry name" value="Phytochelatin_synthase_C"/>
</dbReference>
<dbReference type="PANTHER" id="PTHR33447">
    <property type="entry name" value="GLUTATHIONE GAMMA-GLUTAMYLCYSTEINYLTRANSFERASE"/>
    <property type="match status" value="1"/>
</dbReference>
<dbReference type="PANTHER" id="PTHR33447:SF2">
    <property type="entry name" value="GLUTATHIONE GAMMA-GLUTAMYLCYSTEINYLTRANSFERASE"/>
    <property type="match status" value="1"/>
</dbReference>
<dbReference type="Pfam" id="PF05023">
    <property type="entry name" value="Phytochelatin"/>
    <property type="match status" value="1"/>
</dbReference>
<dbReference type="Pfam" id="PF09328">
    <property type="entry name" value="Phytochelatin_C"/>
    <property type="match status" value="1"/>
</dbReference>
<dbReference type="SUPFAM" id="SSF54001">
    <property type="entry name" value="Cysteine proteinases"/>
    <property type="match status" value="1"/>
</dbReference>
<dbReference type="PROSITE" id="PS51443">
    <property type="entry name" value="PCS"/>
    <property type="match status" value="1"/>
</dbReference>
<reference key="1">
    <citation type="journal article" date="1999" name="EMBO J.">
        <title>Tolerance to toxic metals by a gene family of phytochelatin synthases from plants and yeast.</title>
        <authorList>
            <person name="Clemens S."/>
            <person name="Kim E.J."/>
            <person name="Neumann D."/>
            <person name="Schroeder J.I."/>
        </authorList>
    </citation>
    <scope>NUCLEOTIDE SEQUENCE [MRNA]</scope>
    <scope>FUNCTION</scope>
    <scope>INDUCTION BY CADMIUM</scope>
    <scope>TISSUE SPECIFICITY</scope>
    <source>
        <tissue>Root</tissue>
    </source>
</reference>
<protein>
    <recommendedName>
        <fullName>Glutathione gamma-glutamylcysteinyltransferase 1</fullName>
        <ecNumber>2.3.2.15</ecNumber>
    </recommendedName>
    <alternativeName>
        <fullName>Cadmium tolerance protein</fullName>
    </alternativeName>
    <alternativeName>
        <fullName>Phytochelatin synthase 1</fullName>
    </alternativeName>
    <alternativeName>
        <fullName>TaPCS1</fullName>
    </alternativeName>
</protein>
<name>PCS1_WHEAT</name>
<sequence length="500" mass="55045">MEVASLYRRVLPSPPAVEFASAEGKRLFAEALQGGTMEGFFNLISYFQTQSEPAFCGLASLSVVLNALAIDPGRPWKGPWRWFDESMLDCCEPLHKVKAEGITFGKVVCLAHCAGARVQSFRADQTTIHDFRAHLTRCASSQDCHLISSYHRSPFKQTGTGHFSPIGGYHAEKDMALILDVARFKYPPHWVPLTLLWDAMNTTDEATGLLRGFMLVSRRSSAPSLLYTVSCGHGSWKSMAKYCVEDVPNLLKDESLDNVTTLLSRLVESLPANAGDLIKCVIEVRRKEEGESSLSKEEKERLFLKEKVLQQIRDTDLFRVVHELQYPKGLCGSCSSSSDEDSLAEIAATVCCQGAAFLSGNLVSRDGFCCRETCIKCIEANGDGLKTVISGTVVSKGNEQAVDLLLPTSSSKTSLCNSNLKSKIVKYPSSTDVLTVLLLVLQPNTWLGIKDENVKAEFQSLVSTDNLPDLLKQEILHLRRQLHYLAGCKGQEACQEPPSP</sequence>
<evidence type="ECO:0000250" key="1"/>
<evidence type="ECO:0000255" key="2">
    <source>
        <dbReference type="PROSITE-ProRule" id="PRU00773"/>
    </source>
</evidence>
<evidence type="ECO:0000269" key="3">
    <source>
    </source>
</evidence>
<proteinExistence type="evidence at transcript level"/>
<comment type="function">
    <text evidence="3">Involved in the synthesis of phytochelatins (PC) and homophytochelatins (hPC), the heavy-metal-binding peptides of plants.</text>
</comment>
<comment type="catalytic activity">
    <reaction evidence="2">
        <text>[Glu(-Cys)](n)-Gly + glutathione + H(+) = [Glu(-Cys)](n+1)-Gly + glycine</text>
        <dbReference type="Rhea" id="RHEA:17917"/>
        <dbReference type="Rhea" id="RHEA-COMP:12438"/>
        <dbReference type="Rhea" id="RHEA-COMP:12439"/>
        <dbReference type="ChEBI" id="CHEBI:15378"/>
        <dbReference type="ChEBI" id="CHEBI:57305"/>
        <dbReference type="ChEBI" id="CHEBI:57925"/>
        <dbReference type="ChEBI" id="CHEBI:131728"/>
        <dbReference type="EC" id="2.3.2.15"/>
    </reaction>
</comment>
<comment type="activity regulation">
    <text evidence="1">Requires cadmium for activity.</text>
</comment>
<comment type="tissue specificity">
    <text evidence="3">Expressed in roots and shoots.</text>
</comment>
<comment type="induction">
    <text evidence="3">5- to 10-fold by 100 uM cadmium.</text>
</comment>
<comment type="similarity">
    <text evidence="2">Belongs to the phytochelatin synthase family.</text>
</comment>
<feature type="chain" id="PRO_0000287212" description="Glutathione gamma-glutamylcysteinyltransferase 1">
    <location>
        <begin position="1"/>
        <end position="500"/>
    </location>
</feature>
<feature type="domain" description="Peptidase C83" evidence="2">
    <location>
        <begin position="1"/>
        <end position="221"/>
    </location>
</feature>
<feature type="active site" evidence="2">
    <location>
        <position position="56"/>
    </location>
</feature>
<feature type="active site" evidence="2">
    <location>
        <position position="162"/>
    </location>
</feature>
<feature type="active site" evidence="2">
    <location>
        <position position="180"/>
    </location>
</feature>
<accession>Q9SWW5</accession>